<sequence>MSKNKLSKGQQRRVNANHQRRLKTSAEKADYDDNLFGEPAEGIVISRFGMHADVESADGEVHRCNIRRTIRSLVTGDRVVWRPGKAAAEGVNVKGIVEAVHERTSVLTRPDFYDGVKPIAANIDQIVIVSAILPELSLNIIDRYLVGCETLQVEPLIVLNKIDLLDDEGMDFVNEQMDIYRNIGYRVLMVSSHTQDGLKPLEEALTGRISIFAGQSGVGKSSLLNALLGLQNEILTNDVSNVSGLGQHTTTAARLYHFPHGGDVIDSPGVREFGLWHLEPEQITQGFVEFHDYLGHCKYRDCKHDADPGCAIREAVENGAIAETRFENYHRILESMAQVKTRKNFSDTDD</sequence>
<proteinExistence type="evidence at protein level"/>
<evidence type="ECO:0000255" key="1">
    <source>
        <dbReference type="HAMAP-Rule" id="MF_01820"/>
    </source>
</evidence>
<evidence type="ECO:0000255" key="2">
    <source>
        <dbReference type="PROSITE-ProRule" id="PRU01058"/>
    </source>
</evidence>
<evidence type="ECO:0000256" key="3">
    <source>
        <dbReference type="SAM" id="MobiDB-lite"/>
    </source>
</evidence>
<evidence type="ECO:0000269" key="4">
    <source>
    </source>
</evidence>
<evidence type="ECO:0000305" key="5"/>
<evidence type="ECO:0000305" key="6">
    <source>
    </source>
</evidence>
<evidence type="ECO:0007829" key="7">
    <source>
        <dbReference type="PDB" id="2RCN"/>
    </source>
</evidence>
<comment type="function">
    <text evidence="1">One of several proteins that assist in the late maturation steps of the functional core of the 30S ribosomal subunit. Helps release RbfA from mature subunits. May play a role in the assembly of ribosomal proteins into the subunit. Circularly permuted GTPase that catalyzes slow GTP hydrolysis, GTPase activity is stimulated by the 30S ribosomal subunit.</text>
</comment>
<comment type="cofactor">
    <cofactor evidence="1 4">
        <name>Zn(2+)</name>
        <dbReference type="ChEBI" id="CHEBI:29105"/>
    </cofactor>
    <text evidence="1 4">Binds 1 zinc ion per subunit.</text>
</comment>
<comment type="subunit">
    <text evidence="1 6">Monomer. Associates with 30S ribosomal subunit, binds 16S rRNA.</text>
</comment>
<comment type="subcellular location">
    <subcellularLocation>
        <location evidence="1">Cytoplasm</location>
    </subcellularLocation>
</comment>
<comment type="similarity">
    <text evidence="1">Belongs to the TRAFAC class YlqF/YawG GTPase family. RsgA subfamily.</text>
</comment>
<comment type="sequence caution" evidence="5">
    <conflict type="erroneous initiation">
        <sequence resource="EMBL-CDS" id="AAL23172"/>
    </conflict>
    <text>Extended N-terminus.</text>
</comment>
<gene>
    <name evidence="1" type="primary">rsgA</name>
    <name type="synonym">engC</name>
    <name type="synonym">yjeQ</name>
    <name type="ordered locus">STM4349</name>
</gene>
<dbReference type="EC" id="3.6.1.-" evidence="1"/>
<dbReference type="EMBL" id="AE006468">
    <property type="protein sequence ID" value="AAL23172.1"/>
    <property type="status" value="ALT_INIT"/>
    <property type="molecule type" value="Genomic_DNA"/>
</dbReference>
<dbReference type="RefSeq" id="NP_463213.3">
    <property type="nucleotide sequence ID" value="NC_003197.2"/>
</dbReference>
<dbReference type="PDB" id="2RCN">
    <property type="method" value="X-ray"/>
    <property type="resolution" value="2.25 A"/>
    <property type="chains" value="A=2-350"/>
</dbReference>
<dbReference type="PDBsum" id="2RCN"/>
<dbReference type="SMR" id="Q8ZKB0"/>
<dbReference type="IntAct" id="Q8ZKB0">
    <property type="interactions" value="1"/>
</dbReference>
<dbReference type="STRING" id="99287.STM4349"/>
<dbReference type="PaxDb" id="99287-STM4349"/>
<dbReference type="GeneID" id="1255875"/>
<dbReference type="KEGG" id="stm:STM4349"/>
<dbReference type="PATRIC" id="fig|99287.12.peg.4576"/>
<dbReference type="HOGENOM" id="CLU_033617_2_0_6"/>
<dbReference type="OMA" id="CLVAAYD"/>
<dbReference type="PhylomeDB" id="Q8ZKB0"/>
<dbReference type="EvolutionaryTrace" id="Q8ZKB0"/>
<dbReference type="Proteomes" id="UP000001014">
    <property type="component" value="Chromosome"/>
</dbReference>
<dbReference type="GO" id="GO:0005737">
    <property type="term" value="C:cytoplasm"/>
    <property type="evidence" value="ECO:0007669"/>
    <property type="project" value="UniProtKB-SubCell"/>
</dbReference>
<dbReference type="GO" id="GO:0005525">
    <property type="term" value="F:GTP binding"/>
    <property type="evidence" value="ECO:0007669"/>
    <property type="project" value="UniProtKB-UniRule"/>
</dbReference>
<dbReference type="GO" id="GO:0003924">
    <property type="term" value="F:GTPase activity"/>
    <property type="evidence" value="ECO:0007669"/>
    <property type="project" value="UniProtKB-UniRule"/>
</dbReference>
<dbReference type="GO" id="GO:0046872">
    <property type="term" value="F:metal ion binding"/>
    <property type="evidence" value="ECO:0007669"/>
    <property type="project" value="UniProtKB-KW"/>
</dbReference>
<dbReference type="GO" id="GO:0019843">
    <property type="term" value="F:rRNA binding"/>
    <property type="evidence" value="ECO:0007669"/>
    <property type="project" value="UniProtKB-KW"/>
</dbReference>
<dbReference type="GO" id="GO:0042274">
    <property type="term" value="P:ribosomal small subunit biogenesis"/>
    <property type="evidence" value="ECO:0007669"/>
    <property type="project" value="UniProtKB-UniRule"/>
</dbReference>
<dbReference type="CDD" id="cd01854">
    <property type="entry name" value="YjeQ_EngC"/>
    <property type="match status" value="1"/>
</dbReference>
<dbReference type="FunFam" id="1.10.40.50:FF:000001">
    <property type="entry name" value="Small ribosomal subunit biogenesis GTPase RsgA"/>
    <property type="match status" value="1"/>
</dbReference>
<dbReference type="FunFam" id="3.40.50.300:FF:000389">
    <property type="entry name" value="Small ribosomal subunit biogenesis GTPase RsgA"/>
    <property type="match status" value="1"/>
</dbReference>
<dbReference type="Gene3D" id="2.40.50.140">
    <property type="entry name" value="Nucleic acid-binding proteins"/>
    <property type="match status" value="1"/>
</dbReference>
<dbReference type="Gene3D" id="3.40.50.300">
    <property type="entry name" value="P-loop containing nucleotide triphosphate hydrolases"/>
    <property type="match status" value="1"/>
</dbReference>
<dbReference type="Gene3D" id="1.10.40.50">
    <property type="entry name" value="Probable gtpase engc, domain 3"/>
    <property type="match status" value="1"/>
</dbReference>
<dbReference type="HAMAP" id="MF_01820">
    <property type="entry name" value="GTPase_RsgA"/>
    <property type="match status" value="1"/>
</dbReference>
<dbReference type="InterPro" id="IPR030378">
    <property type="entry name" value="G_CP_dom"/>
</dbReference>
<dbReference type="InterPro" id="IPR012340">
    <property type="entry name" value="NA-bd_OB-fold"/>
</dbReference>
<dbReference type="InterPro" id="IPR027417">
    <property type="entry name" value="P-loop_NTPase"/>
</dbReference>
<dbReference type="InterPro" id="IPR004881">
    <property type="entry name" value="Ribosome_biogen_GTPase_RsgA"/>
</dbReference>
<dbReference type="InterPro" id="IPR010914">
    <property type="entry name" value="RsgA_GTPase_dom"/>
</dbReference>
<dbReference type="NCBIfam" id="NF008931">
    <property type="entry name" value="PRK12288.1"/>
    <property type="match status" value="1"/>
</dbReference>
<dbReference type="NCBIfam" id="TIGR00157">
    <property type="entry name" value="ribosome small subunit-dependent GTPase A"/>
    <property type="match status" value="1"/>
</dbReference>
<dbReference type="PANTHER" id="PTHR32120">
    <property type="entry name" value="SMALL RIBOSOMAL SUBUNIT BIOGENESIS GTPASE RSGA"/>
    <property type="match status" value="1"/>
</dbReference>
<dbReference type="PANTHER" id="PTHR32120:SF11">
    <property type="entry name" value="SMALL RIBOSOMAL SUBUNIT BIOGENESIS GTPASE RSGA 1, MITOCHONDRIAL-RELATED"/>
    <property type="match status" value="1"/>
</dbReference>
<dbReference type="Pfam" id="PF03193">
    <property type="entry name" value="RsgA_GTPase"/>
    <property type="match status" value="1"/>
</dbReference>
<dbReference type="SUPFAM" id="SSF52540">
    <property type="entry name" value="P-loop containing nucleoside triphosphate hydrolases"/>
    <property type="match status" value="1"/>
</dbReference>
<dbReference type="PROSITE" id="PS50936">
    <property type="entry name" value="ENGC_GTPASE"/>
    <property type="match status" value="1"/>
</dbReference>
<dbReference type="PROSITE" id="PS51721">
    <property type="entry name" value="G_CP"/>
    <property type="match status" value="1"/>
</dbReference>
<feature type="chain" id="PRO_0000008157" description="Small ribosomal subunit biogenesis GTPase RsgA">
    <location>
        <begin position="1"/>
        <end position="350"/>
    </location>
</feature>
<feature type="domain" description="CP-type G" evidence="2">
    <location>
        <begin position="104"/>
        <end position="273"/>
    </location>
</feature>
<feature type="region of interest" description="Disordered" evidence="3">
    <location>
        <begin position="1"/>
        <end position="27"/>
    </location>
</feature>
<feature type="compositionally biased region" description="Polar residues" evidence="3">
    <location>
        <begin position="1"/>
        <end position="17"/>
    </location>
</feature>
<feature type="binding site" evidence="1 6">
    <location>
        <begin position="160"/>
        <end position="163"/>
    </location>
    <ligand>
        <name>GTP</name>
        <dbReference type="ChEBI" id="CHEBI:37565"/>
    </ligand>
</feature>
<feature type="binding site" evidence="1 6">
    <location>
        <begin position="214"/>
        <end position="222"/>
    </location>
    <ligand>
        <name>GTP</name>
        <dbReference type="ChEBI" id="CHEBI:37565"/>
    </ligand>
</feature>
<feature type="binding site" evidence="1 4">
    <location>
        <position position="297"/>
    </location>
    <ligand>
        <name>Zn(2+)</name>
        <dbReference type="ChEBI" id="CHEBI:29105"/>
    </ligand>
</feature>
<feature type="binding site" evidence="1 4">
    <location>
        <position position="302"/>
    </location>
    <ligand>
        <name>Zn(2+)</name>
        <dbReference type="ChEBI" id="CHEBI:29105"/>
    </ligand>
</feature>
<feature type="binding site" evidence="1 4">
    <location>
        <position position="304"/>
    </location>
    <ligand>
        <name>Zn(2+)</name>
        <dbReference type="ChEBI" id="CHEBI:29105"/>
    </ligand>
</feature>
<feature type="binding site" evidence="1 4">
    <location>
        <position position="310"/>
    </location>
    <ligand>
        <name>Zn(2+)</name>
        <dbReference type="ChEBI" id="CHEBI:29105"/>
    </ligand>
</feature>
<feature type="strand" evidence="7">
    <location>
        <begin position="40"/>
        <end position="48"/>
    </location>
</feature>
<feature type="strand" evidence="7">
    <location>
        <begin position="51"/>
        <end position="56"/>
    </location>
</feature>
<feature type="strand" evidence="7">
    <location>
        <begin position="61"/>
        <end position="66"/>
    </location>
</feature>
<feature type="strand" evidence="7">
    <location>
        <begin position="78"/>
        <end position="82"/>
    </location>
</feature>
<feature type="strand" evidence="7">
    <location>
        <begin position="95"/>
        <end position="100"/>
    </location>
</feature>
<feature type="strand" evidence="7">
    <location>
        <begin position="106"/>
        <end position="109"/>
    </location>
</feature>
<feature type="strand" evidence="7">
    <location>
        <begin position="117"/>
        <end position="121"/>
    </location>
</feature>
<feature type="strand" evidence="7">
    <location>
        <begin position="125"/>
        <end position="132"/>
    </location>
</feature>
<feature type="turn" evidence="7">
    <location>
        <begin position="133"/>
        <end position="135"/>
    </location>
</feature>
<feature type="helix" evidence="7">
    <location>
        <begin position="138"/>
        <end position="151"/>
    </location>
</feature>
<feature type="strand" evidence="7">
    <location>
        <begin position="154"/>
        <end position="160"/>
    </location>
</feature>
<feature type="helix" evidence="7">
    <location>
        <begin position="162"/>
        <end position="164"/>
    </location>
</feature>
<feature type="helix" evidence="7">
    <location>
        <begin position="167"/>
        <end position="181"/>
    </location>
</feature>
<feature type="turn" evidence="7">
    <location>
        <begin position="182"/>
        <end position="184"/>
    </location>
</feature>
<feature type="strand" evidence="7">
    <location>
        <begin position="187"/>
        <end position="189"/>
    </location>
</feature>
<feature type="turn" evidence="7">
    <location>
        <begin position="192"/>
        <end position="195"/>
    </location>
</feature>
<feature type="helix" evidence="7">
    <location>
        <begin position="198"/>
        <end position="205"/>
    </location>
</feature>
<feature type="strand" evidence="7">
    <location>
        <begin position="208"/>
        <end position="213"/>
    </location>
</feature>
<feature type="helix" evidence="7">
    <location>
        <begin position="220"/>
        <end position="228"/>
    </location>
</feature>
<feature type="strand" evidence="7">
    <location>
        <begin position="254"/>
        <end position="257"/>
    </location>
</feature>
<feature type="strand" evidence="7">
    <location>
        <begin position="263"/>
        <end position="266"/>
    </location>
</feature>
<feature type="helix" evidence="7">
    <location>
        <begin position="268"/>
        <end position="271"/>
    </location>
</feature>
<feature type="helix" evidence="7">
    <location>
        <begin position="280"/>
        <end position="285"/>
    </location>
</feature>
<feature type="helix" evidence="7">
    <location>
        <begin position="288"/>
        <end position="293"/>
    </location>
</feature>
<feature type="strand" evidence="7">
    <location>
        <begin position="297"/>
        <end position="299"/>
    </location>
</feature>
<feature type="strand" evidence="7">
    <location>
        <begin position="304"/>
        <end position="306"/>
    </location>
</feature>
<feature type="helix" evidence="7">
    <location>
        <begin position="311"/>
        <end position="317"/>
    </location>
</feature>
<feature type="helix" evidence="7">
    <location>
        <begin position="323"/>
        <end position="336"/>
    </location>
</feature>
<name>RSGA_SALTY</name>
<protein>
    <recommendedName>
        <fullName evidence="1">Small ribosomal subunit biogenesis GTPase RsgA</fullName>
        <ecNumber evidence="1">3.6.1.-</ecNumber>
    </recommendedName>
</protein>
<accession>Q8ZKB0</accession>
<keyword id="KW-0002">3D-structure</keyword>
<keyword id="KW-0963">Cytoplasm</keyword>
<keyword id="KW-0342">GTP-binding</keyword>
<keyword id="KW-0378">Hydrolase</keyword>
<keyword id="KW-0479">Metal-binding</keyword>
<keyword id="KW-0547">Nucleotide-binding</keyword>
<keyword id="KW-1185">Reference proteome</keyword>
<keyword id="KW-0690">Ribosome biogenesis</keyword>
<keyword id="KW-0694">RNA-binding</keyword>
<keyword id="KW-0699">rRNA-binding</keyword>
<keyword id="KW-0862">Zinc</keyword>
<reference key="1">
    <citation type="journal article" date="2001" name="Nature">
        <title>Complete genome sequence of Salmonella enterica serovar Typhimurium LT2.</title>
        <authorList>
            <person name="McClelland M."/>
            <person name="Sanderson K.E."/>
            <person name="Spieth J."/>
            <person name="Clifton S.W."/>
            <person name="Latreille P."/>
            <person name="Courtney L."/>
            <person name="Porwollik S."/>
            <person name="Ali J."/>
            <person name="Dante M."/>
            <person name="Du F."/>
            <person name="Hou S."/>
            <person name="Layman D."/>
            <person name="Leonard S."/>
            <person name="Nguyen C."/>
            <person name="Scott K."/>
            <person name="Holmes A."/>
            <person name="Grewal N."/>
            <person name="Mulvaney E."/>
            <person name="Ryan E."/>
            <person name="Sun H."/>
            <person name="Florea L."/>
            <person name="Miller W."/>
            <person name="Stoneking T."/>
            <person name="Nhan M."/>
            <person name="Waterston R."/>
            <person name="Wilson R.K."/>
        </authorList>
    </citation>
    <scope>NUCLEOTIDE SEQUENCE [LARGE SCALE GENOMIC DNA]</scope>
    <source>
        <strain>LT2 / SGSC1412 / ATCC 700720</strain>
    </source>
</reference>
<reference key="2">
    <citation type="journal article" date="2007" name="Acta Crystallogr. F">
        <title>Structure of the ribosomal interacting GTPase YjeQ from the enterobacterial species Salmonella typhimurium.</title>
        <authorList>
            <person name="Nichols C.E."/>
            <person name="Johnson C."/>
            <person name="Lamb H.K."/>
            <person name="Lockyer M."/>
            <person name="Charles I.G."/>
            <person name="Hawkins A.R."/>
            <person name="Stammers D.K."/>
        </authorList>
    </citation>
    <scope>X-RAY CRYSTALLOGRAPHY (2.25 ANGSTROMS) OF 2-350 IN COMPLEX WITH GDP AND ZINC IONS</scope>
    <scope>PROBABLE SUBUNIT</scope>
</reference>
<organism>
    <name type="scientific">Salmonella typhimurium (strain LT2 / SGSC1412 / ATCC 700720)</name>
    <dbReference type="NCBI Taxonomy" id="99287"/>
    <lineage>
        <taxon>Bacteria</taxon>
        <taxon>Pseudomonadati</taxon>
        <taxon>Pseudomonadota</taxon>
        <taxon>Gammaproteobacteria</taxon>
        <taxon>Enterobacterales</taxon>
        <taxon>Enterobacteriaceae</taxon>
        <taxon>Salmonella</taxon>
    </lineage>
</organism>